<sequence>MPFPVTTQGSQQTQPPQRHYGITSPISLAAPKETDCLLTQKLIETLKPFGVFEEEEELQRRILILGKLNNLVKEWIREISESKNLPQSVIENVGGKIFTFGSYRLGVHTKGADIDALCVAPRHVDRSDFFTSFYDKLKLQEEVKDLRAVEEAFVPVIKLCFDGIEIDILFARLALQTIPEDLDLRDDSLLKNLDIRCIRSLNGCRVTDEILHLVPNIDNFRLTLRAIKLWAKRHNIYSNILGFLGGVSWAMLVARTCQLYPNAIASTLVHKFFLVFSKWEWPNPVLLKQPEECNLNLPVWDPRVNPSDRYHLMPIITPAYPQQNSTYNVSVSTRMVMVEEFKQGLAITDEILLSKAEWSKLFEAPNFFQKYKHYIVLLASAPTEKQRLEWVGLVESKIRILVGSLEKNEFITLAHVNPQSFPAPKESPDREEFRTMWVIGLVFKKTENSENLSVDLTYDIQSFTDTVYRQAINSKMFELDMKIAAMHVKRKQLHQLLPSHVLQKRKKHSTEGVKLTALNDSSLDLSMDSDNSMSVPSPTSAMKTSPLNSSGSSQGRNSPAPAVTAASVTSIQASEVSVPQANSSESPGGPSSESIPQTATQPAISPPPKPTVSRVVSSTRLVNPSPRPSGNTATKVPNPIVGVKRTSSPNKEESPKKTKTEEDETSEDANCLALSGHDKTETKEQVDLETSAVQSETVPASASLLASQKTSSTDLSDIPALPANPIPVIKNSIKLRLNR</sequence>
<feature type="chain" id="PRO_0000051613" description="Poly(A) polymerase alpha">
    <location>
        <begin position="1"/>
        <end position="739"/>
    </location>
</feature>
<feature type="region of interest" description="Disordered" evidence="4">
    <location>
        <begin position="1"/>
        <end position="22"/>
    </location>
</feature>
<feature type="region of interest" description="Ser/Thr-rich">
    <location>
        <begin position="508"/>
        <end position="643"/>
    </location>
</feature>
<feature type="region of interest" description="Disordered" evidence="4">
    <location>
        <begin position="523"/>
        <end position="725"/>
    </location>
</feature>
<feature type="region of interest" description="Required for interaction with NUDT21" evidence="5">
    <location>
        <begin position="671"/>
        <end position="739"/>
    </location>
</feature>
<feature type="short sequence motif" description="Nuclear localization signal 1" evidence="1">
    <location>
        <begin position="490"/>
        <end position="507"/>
    </location>
</feature>
<feature type="short sequence motif" description="Nuclear localization signal 2" evidence="1">
    <location>
        <begin position="644"/>
        <end position="659"/>
    </location>
</feature>
<feature type="compositionally biased region" description="Low complexity" evidence="4">
    <location>
        <begin position="1"/>
        <end position="17"/>
    </location>
</feature>
<feature type="compositionally biased region" description="Low complexity" evidence="4">
    <location>
        <begin position="523"/>
        <end position="534"/>
    </location>
</feature>
<feature type="compositionally biased region" description="Polar residues" evidence="4">
    <location>
        <begin position="535"/>
        <end position="557"/>
    </location>
</feature>
<feature type="compositionally biased region" description="Polar residues" evidence="4">
    <location>
        <begin position="566"/>
        <end position="582"/>
    </location>
</feature>
<feature type="compositionally biased region" description="Low complexity" evidence="4">
    <location>
        <begin position="583"/>
        <end position="594"/>
    </location>
</feature>
<feature type="compositionally biased region" description="Low complexity" evidence="4">
    <location>
        <begin position="611"/>
        <end position="622"/>
    </location>
</feature>
<feature type="compositionally biased region" description="Basic and acidic residues" evidence="4">
    <location>
        <begin position="650"/>
        <end position="660"/>
    </location>
</feature>
<feature type="compositionally biased region" description="Basic and acidic residues" evidence="4">
    <location>
        <begin position="676"/>
        <end position="686"/>
    </location>
</feature>
<feature type="compositionally biased region" description="Polar residues" evidence="4">
    <location>
        <begin position="691"/>
        <end position="715"/>
    </location>
</feature>
<feature type="binding site" evidence="1">
    <location>
        <begin position="100"/>
        <end position="102"/>
    </location>
    <ligand>
        <name>ATP</name>
        <dbReference type="ChEBI" id="CHEBI:30616"/>
    </ligand>
</feature>
<feature type="binding site" evidence="1">
    <location>
        <position position="109"/>
    </location>
    <ligand>
        <name>ATP</name>
        <dbReference type="ChEBI" id="CHEBI:30616"/>
    </ligand>
</feature>
<feature type="binding site" evidence="1">
    <location>
        <begin position="113"/>
        <end position="115"/>
    </location>
    <ligand>
        <name>ATP</name>
        <dbReference type="ChEBI" id="CHEBI:30616"/>
    </ligand>
</feature>
<feature type="binding site" evidence="1">
    <location>
        <position position="113"/>
    </location>
    <ligand>
        <name>Mg(2+)</name>
        <dbReference type="ChEBI" id="CHEBI:18420"/>
        <label>1</label>
        <note>catalytic</note>
    </ligand>
</feature>
<feature type="binding site" evidence="1">
    <location>
        <position position="113"/>
    </location>
    <ligand>
        <name>Mg(2+)</name>
        <dbReference type="ChEBI" id="CHEBI:18420"/>
        <label>2</label>
        <note>catalytic</note>
    </ligand>
</feature>
<feature type="binding site" evidence="1">
    <location>
        <position position="115"/>
    </location>
    <ligand>
        <name>Mg(2+)</name>
        <dbReference type="ChEBI" id="CHEBI:18420"/>
        <label>1</label>
        <note>catalytic</note>
    </ligand>
</feature>
<feature type="binding site" evidence="1">
    <location>
        <position position="115"/>
    </location>
    <ligand>
        <name>Mg(2+)</name>
        <dbReference type="ChEBI" id="CHEBI:18420"/>
        <label>2</label>
        <note>catalytic</note>
    </ligand>
</feature>
<feature type="binding site" evidence="1">
    <location>
        <position position="167"/>
    </location>
    <ligand>
        <name>ATP</name>
        <dbReference type="ChEBI" id="CHEBI:30616"/>
    </ligand>
</feature>
<feature type="binding site" evidence="1">
    <location>
        <position position="167"/>
    </location>
    <ligand>
        <name>Mg(2+)</name>
        <dbReference type="ChEBI" id="CHEBI:18420"/>
        <label>2</label>
        <note>catalytic</note>
    </ligand>
</feature>
<feature type="binding site" evidence="1">
    <location>
        <position position="228"/>
    </location>
    <ligand>
        <name>ATP</name>
        <dbReference type="ChEBI" id="CHEBI:30616"/>
    </ligand>
</feature>
<feature type="binding site" evidence="1">
    <location>
        <position position="237"/>
    </location>
    <ligand>
        <name>ATP</name>
        <dbReference type="ChEBI" id="CHEBI:30616"/>
    </ligand>
</feature>
<feature type="binding site" evidence="1">
    <location>
        <begin position="246"/>
        <end position="247"/>
    </location>
    <ligand>
        <name>ATP</name>
        <dbReference type="ChEBI" id="CHEBI:30616"/>
    </ligand>
</feature>
<feature type="site" description="Interaction with RNA" evidence="1">
    <location>
        <position position="153"/>
    </location>
</feature>
<feature type="site" description="Interaction with RNA" evidence="1">
    <location>
        <position position="158"/>
    </location>
</feature>
<feature type="site" description="Interaction with RNA" evidence="1">
    <location>
        <position position="328"/>
    </location>
</feature>
<feature type="site" description="Interaction with RNA" evidence="1">
    <location>
        <position position="399"/>
    </location>
</feature>
<feature type="site" description="Interaction with RNA" evidence="1">
    <location>
        <position position="524"/>
    </location>
</feature>
<feature type="modified residue" description="Phosphoserine" evidence="3">
    <location>
        <position position="10"/>
    </location>
</feature>
<feature type="modified residue" description="Phosphoserine" evidence="11">
    <location>
        <position position="24"/>
    </location>
</feature>
<feature type="modified residue" description="Phosphoserine; by MAPK" evidence="6">
    <location>
        <position position="537"/>
    </location>
</feature>
<feature type="modified residue" description="Phosphoserine" evidence="3">
    <location>
        <position position="558"/>
    </location>
</feature>
<feature type="modified residue" description="N6-acetyllysine" evidence="2">
    <location>
        <position position="635"/>
    </location>
</feature>
<feature type="modified residue" description="N6-acetyllysine" evidence="2">
    <location>
        <position position="644"/>
    </location>
</feature>
<feature type="modified residue" description="N6-acetyllysine; alternate" evidence="2">
    <location>
        <position position="730"/>
    </location>
</feature>
<feature type="modified residue" description="Phosphoserine" evidence="3">
    <location>
        <position position="732"/>
    </location>
</feature>
<feature type="modified residue" description="N6-acetyllysine; alternate" evidence="2">
    <location>
        <position position="734"/>
    </location>
</feature>
<feature type="cross-link" description="Glycyl lysine isopeptide (Lys-Gly) (interchain with G-Cter in SUMO)" evidence="7">
    <location>
        <position position="444"/>
    </location>
</feature>
<feature type="cross-link" description="Glycyl lysine isopeptide (Lys-Gly) (interchain with G-Cter in SUMO)" evidence="7">
    <location>
        <position position="445"/>
    </location>
</feature>
<feature type="cross-link" description="Glycyl lysine isopeptide (Lys-Gly) (interchain with G-Cter in SUMO)" evidence="7">
    <location>
        <position position="506"/>
    </location>
</feature>
<feature type="cross-link" description="Glycyl lysine isopeptide (Lys-Gly) (interchain with G-Cter in SUMO)" evidence="7">
    <location>
        <position position="507"/>
    </location>
</feature>
<feature type="cross-link" description="Glycyl lysine isopeptide (Lys-Gly) (interchain with G-Cter in SUMO); alternate">
    <location>
        <position position="730"/>
    </location>
</feature>
<feature type="cross-link" description="Glycyl lysine isopeptide (Lys-Gly) (interchain with G-Cter in SUMO); alternate">
    <location>
        <position position="734"/>
    </location>
</feature>
<feature type="splice variant" id="VSP_004527" description="In isoform 4." evidence="9">
    <original>EWPNPVLLKQPEEC</original>
    <variation>YVFRLYYNKIDCRH</variation>
    <location>
        <begin position="280"/>
        <end position="293"/>
    </location>
</feature>
<feature type="splice variant" id="VSP_004528" description="In isoform 4." evidence="9">
    <location>
        <begin position="294"/>
        <end position="375"/>
    </location>
</feature>
<feature type="splice variant" id="VSP_004529" description="In isoform 3." evidence="9">
    <original>NPSDRYHLMPIIT</original>
    <variation>SVLFFPLQIHTIQ</variation>
    <location>
        <begin position="305"/>
        <end position="317"/>
    </location>
</feature>
<feature type="splice variant" id="VSP_004530" description="In isoform 3." evidence="9">
    <location>
        <begin position="318"/>
        <end position="375"/>
    </location>
</feature>
<feature type="splice variant" id="VSP_004531" description="In isoform 2." evidence="9">
    <original>HYI</original>
    <variation>YVK</variation>
    <location>
        <begin position="373"/>
        <end position="375"/>
    </location>
</feature>
<feature type="splice variant" id="VSP_004532" description="In isoform 2." evidence="9">
    <location>
        <begin position="376"/>
        <end position="739"/>
    </location>
</feature>
<feature type="mutagenesis site" description="Some loss of sumoylation. No change in nuclear localization." evidence="7">
    <original>KK</original>
    <variation>RR</variation>
    <location>
        <begin position="444"/>
        <end position="445"/>
    </location>
</feature>
<feature type="mutagenesis site" description="Eliminates MAPK-mediated phosphorylation." evidence="6">
    <original>S</original>
    <variation>A</variation>
    <location>
        <position position="537"/>
    </location>
</feature>
<feature type="mutagenesis site" description="Some loss of sumoylation; Largely localized to the cytoplasm." evidence="7">
    <original>KK</original>
    <variation>RR</variation>
    <location>
        <begin position="656"/>
        <end position="657"/>
    </location>
</feature>
<feature type="sequence conflict" description="In Ref. 1; AAC52586." evidence="10" ref="1">
    <original>K</original>
    <variation>L</variation>
    <location>
        <position position="47"/>
    </location>
</feature>
<accession>Q61183</accession>
<accession>Q61208</accession>
<accession>Q61209</accession>
<accession>Q8K4X2</accession>
<reference key="1">
    <citation type="journal article" date="1996" name="Mol. Cell. Biol.">
        <title>Complex alternative RNA processing generates an unexpected diversity of poly(A) polymerase isoforms.</title>
        <authorList>
            <person name="Zhao W."/>
            <person name="Manley J.L."/>
        </authorList>
    </citation>
    <scope>NUCLEOTIDE SEQUENCE [MRNA] (ISOFORMS 2; 3 AND 4)</scope>
    <source>
        <tissue>Brain</tissue>
    </source>
</reference>
<reference key="2">
    <citation type="journal article" date="2002" name="Science">
        <title>Regulation of spermatogenesis by testis-specific, cytoplasmic poly(A) polymerase TPAP.</title>
        <authorList>
            <person name="Kashiwabara S."/>
            <person name="Noguchi J."/>
            <person name="Zhuang T."/>
            <person name="Ohmura K."/>
            <person name="Honda A."/>
            <person name="Sugiura S."/>
            <person name="Miyamoto K."/>
            <person name="Takahashi S."/>
            <person name="Inoue K."/>
            <person name="Ogura A."/>
            <person name="Baba T."/>
        </authorList>
    </citation>
    <scope>NUCLEOTIDE SEQUENCE [GENOMIC DNA] (ISOFORM 1)</scope>
    <source>
        <strain>129/SvJ</strain>
    </source>
</reference>
<reference key="3">
    <citation type="journal article" date="2001" name="Biochem. Biophys. Res. Commun.">
        <title>Interaction of poly(A) polymerase with the 25-kDa subunit of cleavage factor I.</title>
        <authorList>
            <person name="Kim H."/>
            <person name="Lee Y."/>
        </authorList>
    </citation>
    <scope>INTERACTION WITH NUDT21</scope>
</reference>
<reference key="4">
    <citation type="journal article" date="2008" name="Genes Dev.">
        <title>Sumoylation regulates multiple aspects of mammalian poly(A) polymerase function.</title>
        <authorList>
            <person name="Vethantham V."/>
            <person name="Rao N."/>
            <person name="Manley J.L."/>
        </authorList>
    </citation>
    <scope>SUMOYLATION AT LYS-444; LYS-445; LYS-506; LYS-507; LYS-730 AND LYS-734</scope>
    <scope>SUBCELLULAR LOCATION</scope>
    <scope>TISSUE SPECIFICITY</scope>
    <scope>FUNCTION</scope>
    <scope>MUTAGENESIS OF 444-LYS-LYS-445; 506-LYS-LYS-507 AND 656-LYS-LYS-657</scope>
</reference>
<reference key="5">
    <citation type="journal article" date="2008" name="Nucleic Acids Res.">
        <title>ERK is a novel regulatory kinase for poly(A) polymerase.</title>
        <authorList>
            <person name="Lee S.-H."/>
            <person name="Choi H.-S."/>
            <person name="Kim H."/>
            <person name="Lee Y."/>
        </authorList>
    </citation>
    <scope>PHOSPHORYLATION AT SER-537</scope>
    <scope>FUNCTION</scope>
    <scope>CATALYTIC ACTIVITY</scope>
    <scope>IDENTIFICATION BY MASS SPECTROMETRY</scope>
    <scope>MUTAGENESIS OF SER-537</scope>
</reference>
<reference key="6">
    <citation type="journal article" date="2009" name="J. Biol. Chem.">
        <title>Inositol 1,4,5-triphosphate receptor-binding protein released with inositol 1,4,5-triphosphate (IRBIT) associates with components of the mRNA 3' processing machinery in a phosphorylation-dependent manner and inhibits polyadenylation.</title>
        <authorList>
            <person name="Kiefer H."/>
            <person name="Mizutani A."/>
            <person name="Iemura S."/>
            <person name="Natsume T."/>
            <person name="Ando H."/>
            <person name="Kuroda Y."/>
            <person name="Mikoshiba K."/>
        </authorList>
    </citation>
    <scope>INTERACTION WITH FIP1L1</scope>
</reference>
<reference key="7">
    <citation type="journal article" date="2010" name="Cell">
        <title>A tissue-specific atlas of mouse protein phosphorylation and expression.</title>
        <authorList>
            <person name="Huttlin E.L."/>
            <person name="Jedrychowski M.P."/>
            <person name="Elias J.E."/>
            <person name="Goswami T."/>
            <person name="Rad R."/>
            <person name="Beausoleil S.A."/>
            <person name="Villen J."/>
            <person name="Haas W."/>
            <person name="Sowa M.E."/>
            <person name="Gygi S.P."/>
        </authorList>
    </citation>
    <scope>PHOSPHORYLATION [LARGE SCALE ANALYSIS] AT SER-24</scope>
    <scope>IDENTIFICATION BY MASS SPECTROMETRY [LARGE SCALE ANALYSIS]</scope>
    <source>
        <tissue>Brain</tissue>
        <tissue>Brown adipose tissue</tissue>
        <tissue>Heart</tissue>
        <tissue>Kidney</tissue>
        <tissue>Liver</tissue>
        <tissue>Lung</tissue>
        <tissue>Pancreas</tissue>
        <tissue>Spleen</tissue>
        <tissue>Testis</tissue>
    </source>
</reference>
<keyword id="KW-0007">Acetylation</keyword>
<keyword id="KW-0025">Alternative splicing</keyword>
<keyword id="KW-0067">ATP-binding</keyword>
<keyword id="KW-1017">Isopeptide bond</keyword>
<keyword id="KW-0460">Magnesium</keyword>
<keyword id="KW-0464">Manganese</keyword>
<keyword id="KW-0479">Metal-binding</keyword>
<keyword id="KW-0507">mRNA processing</keyword>
<keyword id="KW-0547">Nucleotide-binding</keyword>
<keyword id="KW-0539">Nucleus</keyword>
<keyword id="KW-0597">Phosphoprotein</keyword>
<keyword id="KW-1185">Reference proteome</keyword>
<keyword id="KW-0694">RNA-binding</keyword>
<keyword id="KW-0808">Transferase</keyword>
<keyword id="KW-0832">Ubl conjugation</keyword>
<evidence type="ECO:0000250" key="1"/>
<evidence type="ECO:0000250" key="2">
    <source>
        <dbReference type="UniProtKB" id="P25500"/>
    </source>
</evidence>
<evidence type="ECO:0000250" key="3">
    <source>
        <dbReference type="UniProtKB" id="P51003"/>
    </source>
</evidence>
<evidence type="ECO:0000256" key="4">
    <source>
        <dbReference type="SAM" id="MobiDB-lite"/>
    </source>
</evidence>
<evidence type="ECO:0000269" key="5">
    <source>
    </source>
</evidence>
<evidence type="ECO:0000269" key="6">
    <source>
    </source>
</evidence>
<evidence type="ECO:0000269" key="7">
    <source>
    </source>
</evidence>
<evidence type="ECO:0000269" key="8">
    <source>
    </source>
</evidence>
<evidence type="ECO:0000303" key="9">
    <source>
    </source>
</evidence>
<evidence type="ECO:0000305" key="10"/>
<evidence type="ECO:0007744" key="11">
    <source>
    </source>
</evidence>
<protein>
    <recommendedName>
        <fullName>Poly(A) polymerase alpha</fullName>
        <shortName>PAP-alpha</shortName>
        <ecNumber evidence="6">2.7.7.19</ecNumber>
    </recommendedName>
    <alternativeName>
        <fullName>Polynucleotide adenylyltransferase</fullName>
    </alternativeName>
</protein>
<organism>
    <name type="scientific">Mus musculus</name>
    <name type="common">Mouse</name>
    <dbReference type="NCBI Taxonomy" id="10090"/>
    <lineage>
        <taxon>Eukaryota</taxon>
        <taxon>Metazoa</taxon>
        <taxon>Chordata</taxon>
        <taxon>Craniata</taxon>
        <taxon>Vertebrata</taxon>
        <taxon>Euteleostomi</taxon>
        <taxon>Mammalia</taxon>
        <taxon>Eutheria</taxon>
        <taxon>Euarchontoglires</taxon>
        <taxon>Glires</taxon>
        <taxon>Rodentia</taxon>
        <taxon>Myomorpha</taxon>
        <taxon>Muroidea</taxon>
        <taxon>Muridae</taxon>
        <taxon>Murinae</taxon>
        <taxon>Mus</taxon>
        <taxon>Mus</taxon>
    </lineage>
</organism>
<dbReference type="EC" id="2.7.7.19" evidence="6"/>
<dbReference type="EMBL" id="U52197">
    <property type="protein sequence ID" value="AAC52586.1"/>
    <property type="molecule type" value="mRNA"/>
</dbReference>
<dbReference type="EMBL" id="U58134">
    <property type="protein sequence ID" value="AAC52608.1"/>
    <property type="molecule type" value="mRNA"/>
</dbReference>
<dbReference type="EMBL" id="U58135">
    <property type="protein sequence ID" value="AAC52609.1"/>
    <property type="molecule type" value="mRNA"/>
</dbReference>
<dbReference type="EMBL" id="AB086650">
    <property type="protein sequence ID" value="BAC00996.1"/>
    <property type="molecule type" value="Genomic_DNA"/>
</dbReference>
<dbReference type="CCDS" id="CCDS49163.1">
    <molecule id="Q61183-1"/>
</dbReference>
<dbReference type="RefSeq" id="NP_035242.1">
    <molecule id="Q61183-1"/>
    <property type="nucleotide sequence ID" value="NM_011112.4"/>
</dbReference>
<dbReference type="SMR" id="Q61183"/>
<dbReference type="BioGRID" id="202227">
    <property type="interactions" value="1"/>
</dbReference>
<dbReference type="ELM" id="Q61183"/>
<dbReference type="FunCoup" id="Q61183">
    <property type="interactions" value="5071"/>
</dbReference>
<dbReference type="STRING" id="10090.ENSMUSP00000105527"/>
<dbReference type="GlyGen" id="Q61183">
    <property type="glycosylation" value="8 sites, 1 N-linked glycan (1 site), 1 O-linked glycan (4 sites)"/>
</dbReference>
<dbReference type="iPTMnet" id="Q61183"/>
<dbReference type="PhosphoSitePlus" id="Q61183"/>
<dbReference type="jPOST" id="Q61183"/>
<dbReference type="PaxDb" id="10090-ENSMUSP00000105527"/>
<dbReference type="PeptideAtlas" id="Q61183"/>
<dbReference type="ProteomicsDB" id="287880">
    <molecule id="Q61183-1"/>
</dbReference>
<dbReference type="ProteomicsDB" id="287881">
    <molecule id="Q61183-2"/>
</dbReference>
<dbReference type="ProteomicsDB" id="287882">
    <molecule id="Q61183-3"/>
</dbReference>
<dbReference type="ProteomicsDB" id="287883">
    <molecule id="Q61183-4"/>
</dbReference>
<dbReference type="Pumba" id="Q61183"/>
<dbReference type="Antibodypedia" id="86">
    <property type="antibodies" value="140 antibodies from 21 providers"/>
</dbReference>
<dbReference type="DNASU" id="18789"/>
<dbReference type="Ensembl" id="ENSMUST00000021535.14">
    <molecule id="Q61183-1"/>
    <property type="protein sequence ID" value="ENSMUSP00000021535.8"/>
    <property type="gene ID" value="ENSMUSG00000021111.16"/>
</dbReference>
<dbReference type="Ensembl" id="ENSMUST00000109901.9">
    <molecule id="Q61183-1"/>
    <property type="protein sequence ID" value="ENSMUSP00000105527.3"/>
    <property type="gene ID" value="ENSMUSG00000021111.16"/>
</dbReference>
<dbReference type="GeneID" id="18789"/>
<dbReference type="KEGG" id="mmu:18789"/>
<dbReference type="UCSC" id="uc007oyv.1">
    <molecule id="Q61183-2"/>
    <property type="organism name" value="mouse"/>
</dbReference>
<dbReference type="UCSC" id="uc007oyz.2">
    <molecule id="Q61183-1"/>
    <property type="organism name" value="mouse"/>
</dbReference>
<dbReference type="AGR" id="MGI:109301"/>
<dbReference type="CTD" id="10914"/>
<dbReference type="MGI" id="MGI:109301">
    <property type="gene designation" value="Papola"/>
</dbReference>
<dbReference type="VEuPathDB" id="HostDB:ENSMUSG00000021111"/>
<dbReference type="eggNOG" id="KOG2245">
    <property type="taxonomic scope" value="Eukaryota"/>
</dbReference>
<dbReference type="GeneTree" id="ENSGT00940000154598"/>
<dbReference type="InParanoid" id="Q61183"/>
<dbReference type="OMA" id="PAYPAMC"/>
<dbReference type="OrthoDB" id="412748at2759"/>
<dbReference type="PhylomeDB" id="Q61183"/>
<dbReference type="TreeFam" id="TF300842"/>
<dbReference type="Reactome" id="R-MMU-72187">
    <property type="pathway name" value="mRNA 3'-end processing"/>
</dbReference>
<dbReference type="Reactome" id="R-MMU-72203">
    <property type="pathway name" value="Processing of Capped Intron-Containing Pre-mRNA"/>
</dbReference>
<dbReference type="Reactome" id="R-MMU-73856">
    <property type="pathway name" value="RNA Polymerase II Transcription Termination"/>
</dbReference>
<dbReference type="Reactome" id="R-MMU-77595">
    <property type="pathway name" value="Processing of Intronless Pre-mRNAs"/>
</dbReference>
<dbReference type="BioGRID-ORCS" id="18789">
    <property type="hits" value="10 hits in 48 CRISPR screens"/>
</dbReference>
<dbReference type="ChiTaRS" id="Papola">
    <property type="organism name" value="mouse"/>
</dbReference>
<dbReference type="PRO" id="PR:Q61183"/>
<dbReference type="Proteomes" id="UP000000589">
    <property type="component" value="Chromosome 12"/>
</dbReference>
<dbReference type="RNAct" id="Q61183">
    <property type="molecule type" value="protein"/>
</dbReference>
<dbReference type="Bgee" id="ENSMUSG00000021111">
    <property type="expression patterns" value="Expressed in undifferentiated genital tubercle and 279 other cell types or tissues"/>
</dbReference>
<dbReference type="ExpressionAtlas" id="Q61183">
    <property type="expression patterns" value="baseline and differential"/>
</dbReference>
<dbReference type="GO" id="GO:0005654">
    <property type="term" value="C:nucleoplasm"/>
    <property type="evidence" value="ECO:0007669"/>
    <property type="project" value="Ensembl"/>
</dbReference>
<dbReference type="GO" id="GO:0005524">
    <property type="term" value="F:ATP binding"/>
    <property type="evidence" value="ECO:0000250"/>
    <property type="project" value="UniProtKB"/>
</dbReference>
<dbReference type="GO" id="GO:0000287">
    <property type="term" value="F:magnesium ion binding"/>
    <property type="evidence" value="ECO:0000250"/>
    <property type="project" value="UniProtKB"/>
</dbReference>
<dbReference type="GO" id="GO:0030145">
    <property type="term" value="F:manganese ion binding"/>
    <property type="evidence" value="ECO:0000250"/>
    <property type="project" value="UniProtKB"/>
</dbReference>
<dbReference type="GO" id="GO:1990817">
    <property type="term" value="F:poly(A) RNA polymerase activity"/>
    <property type="evidence" value="ECO:0000314"/>
    <property type="project" value="MGI"/>
</dbReference>
<dbReference type="GO" id="GO:0003723">
    <property type="term" value="F:RNA binding"/>
    <property type="evidence" value="ECO:0007669"/>
    <property type="project" value="UniProtKB-KW"/>
</dbReference>
<dbReference type="GO" id="GO:0180010">
    <property type="term" value="P:co-transcriptional mRNA 3'-end processing, cleavage and polyadenylation pathway"/>
    <property type="evidence" value="ECO:0000250"/>
    <property type="project" value="UniProtKB"/>
</dbReference>
<dbReference type="GO" id="GO:0180011">
    <property type="term" value="P:cytosolic mRNA polyadenylation"/>
    <property type="evidence" value="ECO:0000314"/>
    <property type="project" value="MGI"/>
</dbReference>
<dbReference type="CDD" id="cd05402">
    <property type="entry name" value="NT_PAP_TUTase"/>
    <property type="match status" value="1"/>
</dbReference>
<dbReference type="FunFam" id="3.30.460.10:FF:000002">
    <property type="entry name" value="Poly(A) polymerase alpha, putative"/>
    <property type="match status" value="1"/>
</dbReference>
<dbReference type="FunFam" id="1.10.1410.10:FF:000001">
    <property type="entry name" value="Putative poly(A) polymerase gamma"/>
    <property type="match status" value="1"/>
</dbReference>
<dbReference type="FunFam" id="3.30.70.590:FF:000001">
    <property type="entry name" value="Putative poly(A) polymerase gamma"/>
    <property type="match status" value="1"/>
</dbReference>
<dbReference type="Gene3D" id="1.10.1410.10">
    <property type="match status" value="1"/>
</dbReference>
<dbReference type="Gene3D" id="3.30.460.10">
    <property type="entry name" value="Beta Polymerase, domain 2"/>
    <property type="match status" value="1"/>
</dbReference>
<dbReference type="Gene3D" id="3.30.70.590">
    <property type="entry name" value="Poly(A) polymerase predicted RNA binding domain"/>
    <property type="match status" value="1"/>
</dbReference>
<dbReference type="InterPro" id="IPR043519">
    <property type="entry name" value="NT_sf"/>
</dbReference>
<dbReference type="InterPro" id="IPR011068">
    <property type="entry name" value="NuclTrfase_I-like_C"/>
</dbReference>
<dbReference type="InterPro" id="IPR007012">
    <property type="entry name" value="PolA_pol_cen_dom"/>
</dbReference>
<dbReference type="InterPro" id="IPR048840">
    <property type="entry name" value="PolA_pol_NTPase"/>
</dbReference>
<dbReference type="InterPro" id="IPR007010">
    <property type="entry name" value="PolA_pol_RNA-bd_dom"/>
</dbReference>
<dbReference type="InterPro" id="IPR014492">
    <property type="entry name" value="PolyA_polymerase"/>
</dbReference>
<dbReference type="PANTHER" id="PTHR10682">
    <property type="entry name" value="POLY A POLYMERASE"/>
    <property type="match status" value="1"/>
</dbReference>
<dbReference type="PANTHER" id="PTHR10682:SF9">
    <property type="entry name" value="POLY(A) POLYMERASE ALPHA"/>
    <property type="match status" value="1"/>
</dbReference>
<dbReference type="Pfam" id="PF04928">
    <property type="entry name" value="PAP_central"/>
    <property type="match status" value="1"/>
</dbReference>
<dbReference type="Pfam" id="PF20750">
    <property type="entry name" value="PAP_NTPase"/>
    <property type="match status" value="1"/>
</dbReference>
<dbReference type="Pfam" id="PF04926">
    <property type="entry name" value="PAP_RNA-bind"/>
    <property type="match status" value="2"/>
</dbReference>
<dbReference type="PIRSF" id="PIRSF018425">
    <property type="entry name" value="PolyA_polymerase"/>
    <property type="match status" value="1"/>
</dbReference>
<dbReference type="SUPFAM" id="SSF81301">
    <property type="entry name" value="Nucleotidyltransferase"/>
    <property type="match status" value="1"/>
</dbReference>
<dbReference type="SUPFAM" id="SSF55003">
    <property type="entry name" value="PAP/Archaeal CCA-adding enzyme, C-terminal domain"/>
    <property type="match status" value="1"/>
</dbReference>
<dbReference type="SUPFAM" id="SSF81631">
    <property type="entry name" value="PAP/OAS1 substrate-binding domain"/>
    <property type="match status" value="1"/>
</dbReference>
<comment type="function">
    <text evidence="3 6 7">Polymerase that creates the 3'-poly(A) tail of mRNA's. Also required for the endoribonucleolytic cleavage reaction at some polyadenylation sites. May acquire specificity through interaction with a cleavage and polyadenylation specificity factor (CPSF) at its C-terminus.</text>
</comment>
<comment type="catalytic activity">
    <reaction evidence="6">
        <text>RNA(n) + ATP = RNA(n)-3'-adenine ribonucleotide + diphosphate</text>
        <dbReference type="Rhea" id="RHEA:11332"/>
        <dbReference type="Rhea" id="RHEA-COMP:14527"/>
        <dbReference type="Rhea" id="RHEA-COMP:17347"/>
        <dbReference type="ChEBI" id="CHEBI:30616"/>
        <dbReference type="ChEBI" id="CHEBI:33019"/>
        <dbReference type="ChEBI" id="CHEBI:140395"/>
        <dbReference type="ChEBI" id="CHEBI:173115"/>
        <dbReference type="EC" id="2.7.7.19"/>
    </reaction>
</comment>
<comment type="cofactor">
    <cofactor evidence="1">
        <name>Mg(2+)</name>
        <dbReference type="ChEBI" id="CHEBI:18420"/>
    </cofactor>
    <cofactor evidence="1">
        <name>Mn(2+)</name>
        <dbReference type="ChEBI" id="CHEBI:29035"/>
    </cofactor>
    <text evidence="1">Binds 2 magnesium ions. Also active with manganese.</text>
</comment>
<comment type="subunit">
    <text evidence="2 3 8">Monomer. Found in a complex with CPSF1, FIP1L1 and PAPOLA. Interacts with AHCYL1 and FIP1L1; the interaction with AHCYL1 seems to increase interaction with FIP1L1 (PubMed:19224921). Interacts with NUDT21; the interaction is diminished by acetylation. Interacts with KPNB1; the interaction promotes PAP nuclear import and is inhibited by acetylation of PAP (By similarity).</text>
</comment>
<comment type="subcellular location">
    <subcellularLocation>
        <location evidence="1">Nucleus</location>
    </subcellularLocation>
</comment>
<comment type="alternative products">
    <event type="alternative splicing"/>
    <isoform>
        <id>Q61183-1</id>
        <name>1</name>
        <sequence type="displayed"/>
    </isoform>
    <isoform>
        <id>Q61183-2</id>
        <name>2</name>
        <name>III</name>
        <sequence type="described" ref="VSP_004531 VSP_004532"/>
    </isoform>
    <isoform>
        <id>Q61183-3</id>
        <name>3</name>
        <name>V</name>
        <sequence type="described" ref="VSP_004529 VSP_004530"/>
    </isoform>
    <isoform>
        <id>Q61183-4</id>
        <name>4</name>
        <name>VI</name>
        <sequence type="described" ref="VSP_004527 VSP_004528"/>
    </isoform>
</comment>
<comment type="tissue specificity">
    <text evidence="7">Expressed in brain, thymus, lung, kidney, bladder, testis and spleen.</text>
</comment>
<comment type="PTM">
    <text evidence="7">Polysumoylated. Varying sumoylation depending on tissue- and cell-type. Highly sumoylated in bladder and NIH 3T3 cells. Sumoylation is required for nuclear localization and enhances PAP stability. Desumoylated by SENP1. Inhibits polymerase activity.</text>
</comment>
<comment type="PTM">
    <text evidence="1">Hyperphosphorylation on multiple CDK2 consensus and non-consensus sites in the C-terminal Ser/Thr-rich region represses PAP activity in late M-phase. Phosphorylation/dephosphorylation may regulate the interaction between PAP and CPSF (By similarity).</text>
</comment>
<comment type="PTM">
    <text evidence="1">Acetylated in the C-terminus. Acetylation decreases interaction with NUDT21 and KPNB1, and inhibits nuclear localization through inhibiting binding to the importin alpha/beta complex (By similarity).</text>
</comment>
<comment type="similarity">
    <text evidence="10">Belongs to the poly(A) polymerase family.</text>
</comment>
<name>PAPOA_MOUSE</name>
<proteinExistence type="evidence at protein level"/>
<gene>
    <name type="primary">Papola</name>
    <name type="synonym">Pap</name>
    <name type="synonym">Plap</name>
</gene>